<protein>
    <recommendedName>
        <fullName>Delta-guaiene synthase 3</fullName>
        <ecNumber>4.2.3.87</ecNumber>
        <ecNumber>4.2.3.93</ecNumber>
    </recommendedName>
</protein>
<keyword id="KW-0456">Lyase</keyword>
<keyword id="KW-0460">Magnesium</keyword>
<keyword id="KW-0479">Metal-binding</keyword>
<dbReference type="EC" id="4.2.3.87"/>
<dbReference type="EC" id="4.2.3.93"/>
<dbReference type="EMBL" id="GU083699">
    <property type="protein sequence ID" value="ACY38197.1"/>
    <property type="molecule type" value="mRNA"/>
</dbReference>
<dbReference type="SMR" id="D0VMR8"/>
<dbReference type="KEGG" id="ag:ACY38197"/>
<dbReference type="UniPathway" id="UPA00213"/>
<dbReference type="GO" id="GO:0000287">
    <property type="term" value="F:magnesium ion binding"/>
    <property type="evidence" value="ECO:0007669"/>
    <property type="project" value="InterPro"/>
</dbReference>
<dbReference type="GO" id="GO:0010334">
    <property type="term" value="F:sesquiterpene synthase activity"/>
    <property type="evidence" value="ECO:0000314"/>
    <property type="project" value="UniProtKB"/>
</dbReference>
<dbReference type="GO" id="GO:0016102">
    <property type="term" value="P:diterpenoid biosynthetic process"/>
    <property type="evidence" value="ECO:0007669"/>
    <property type="project" value="InterPro"/>
</dbReference>
<dbReference type="GO" id="GO:0045338">
    <property type="term" value="P:farnesyl diphosphate metabolic process"/>
    <property type="evidence" value="ECO:0000314"/>
    <property type="project" value="UniProtKB"/>
</dbReference>
<dbReference type="GO" id="GO:0009753">
    <property type="term" value="P:response to jasmonic acid"/>
    <property type="evidence" value="ECO:0000314"/>
    <property type="project" value="UniProtKB"/>
</dbReference>
<dbReference type="GO" id="GO:0051762">
    <property type="term" value="P:sesquiterpene biosynthetic process"/>
    <property type="evidence" value="ECO:0000314"/>
    <property type="project" value="UniProtKB"/>
</dbReference>
<dbReference type="CDD" id="cd00684">
    <property type="entry name" value="Terpene_cyclase_plant_C1"/>
    <property type="match status" value="1"/>
</dbReference>
<dbReference type="FunFam" id="1.10.600.10:FF:000007">
    <property type="entry name" value="Isoprene synthase, chloroplastic"/>
    <property type="match status" value="1"/>
</dbReference>
<dbReference type="Gene3D" id="1.10.600.10">
    <property type="entry name" value="Farnesyl Diphosphate Synthase"/>
    <property type="match status" value="1"/>
</dbReference>
<dbReference type="Gene3D" id="1.50.10.130">
    <property type="entry name" value="Terpene synthase, N-terminal domain"/>
    <property type="match status" value="1"/>
</dbReference>
<dbReference type="InterPro" id="IPR008949">
    <property type="entry name" value="Isoprenoid_synthase_dom_sf"/>
</dbReference>
<dbReference type="InterPro" id="IPR034741">
    <property type="entry name" value="Terpene_cyclase-like_1_C"/>
</dbReference>
<dbReference type="InterPro" id="IPR044814">
    <property type="entry name" value="Terpene_cyclase_plant_C1"/>
</dbReference>
<dbReference type="InterPro" id="IPR001906">
    <property type="entry name" value="Terpene_synth_N"/>
</dbReference>
<dbReference type="InterPro" id="IPR036965">
    <property type="entry name" value="Terpene_synth_N_sf"/>
</dbReference>
<dbReference type="InterPro" id="IPR050148">
    <property type="entry name" value="Terpene_synthase-like"/>
</dbReference>
<dbReference type="InterPro" id="IPR005630">
    <property type="entry name" value="Terpene_synthase_metal-bd"/>
</dbReference>
<dbReference type="InterPro" id="IPR008930">
    <property type="entry name" value="Terpenoid_cyclase/PrenylTrfase"/>
</dbReference>
<dbReference type="PANTHER" id="PTHR31225:SF251">
    <property type="entry name" value="(-)-GERMACRENE D SYNTHASE-LIKE ISOFORM X2"/>
    <property type="match status" value="1"/>
</dbReference>
<dbReference type="PANTHER" id="PTHR31225">
    <property type="entry name" value="OS04G0344100 PROTEIN-RELATED"/>
    <property type="match status" value="1"/>
</dbReference>
<dbReference type="Pfam" id="PF01397">
    <property type="entry name" value="Terpene_synth"/>
    <property type="match status" value="1"/>
</dbReference>
<dbReference type="Pfam" id="PF03936">
    <property type="entry name" value="Terpene_synth_C"/>
    <property type="match status" value="1"/>
</dbReference>
<dbReference type="SFLD" id="SFLDS00005">
    <property type="entry name" value="Isoprenoid_Synthase_Type_I"/>
    <property type="match status" value="1"/>
</dbReference>
<dbReference type="SFLD" id="SFLDG01019">
    <property type="entry name" value="Terpene_Cyclase_Like_1_C_Termi"/>
    <property type="match status" value="1"/>
</dbReference>
<dbReference type="SUPFAM" id="SSF48239">
    <property type="entry name" value="Terpenoid cyclases/Protein prenyltransferases"/>
    <property type="match status" value="1"/>
</dbReference>
<dbReference type="SUPFAM" id="SSF48576">
    <property type="entry name" value="Terpenoid synthases"/>
    <property type="match status" value="1"/>
</dbReference>
<gene>
    <name type="primary">C4</name>
</gene>
<organism>
    <name type="scientific">Aquilaria crassna</name>
    <name type="common">Eagle wood</name>
    <dbReference type="NCBI Taxonomy" id="223751"/>
    <lineage>
        <taxon>Eukaryota</taxon>
        <taxon>Viridiplantae</taxon>
        <taxon>Streptophyta</taxon>
        <taxon>Embryophyta</taxon>
        <taxon>Tracheophyta</taxon>
        <taxon>Spermatophyta</taxon>
        <taxon>Magnoliopsida</taxon>
        <taxon>eudicotyledons</taxon>
        <taxon>Gunneridae</taxon>
        <taxon>Pentapetalae</taxon>
        <taxon>rosids</taxon>
        <taxon>malvids</taxon>
        <taxon>Malvales</taxon>
        <taxon>Thymelaeaceae</taxon>
        <taxon>Aquilaria</taxon>
    </lineage>
</organism>
<comment type="function">
    <text evidence="2">Sesquiterpene synthase involved in the biosynthesis of delta-guaiene (78.2%) and alpha-guaiene (20.9%), two structures composed of five- and seven-membered rings. Also produces 0.9% of alpha-humulene.</text>
</comment>
<comment type="catalytic activity">
    <reaction evidence="2">
        <text>(2E,6E)-farnesyl diphosphate = delta-guaiene + diphosphate</text>
        <dbReference type="Rhea" id="RHEA:31831"/>
        <dbReference type="ChEBI" id="CHEBI:33019"/>
        <dbReference type="ChEBI" id="CHEBI:63447"/>
        <dbReference type="ChEBI" id="CHEBI:175763"/>
        <dbReference type="EC" id="4.2.3.93"/>
    </reaction>
</comment>
<comment type="catalytic activity">
    <reaction evidence="2">
        <text>(2E,6E)-farnesyl diphosphate = alpha-guaiene + diphosphate</text>
        <dbReference type="Rhea" id="RHEA:31807"/>
        <dbReference type="ChEBI" id="CHEBI:33019"/>
        <dbReference type="ChEBI" id="CHEBI:63443"/>
        <dbReference type="ChEBI" id="CHEBI:175763"/>
        <dbReference type="EC" id="4.2.3.87"/>
    </reaction>
</comment>
<comment type="cofactor">
    <cofactor evidence="1">
        <name>Mg(2+)</name>
        <dbReference type="ChEBI" id="CHEBI:18420"/>
    </cofactor>
    <text evidence="1">Binds 3 Mg(2+) ions per subunit.</text>
</comment>
<comment type="biophysicochemical properties">
    <kinetics>
        <KM evidence="2">3.05 uM for farnesyl diphosphate</KM>
        <text>kcat is 7.34 x 10(-3) sec(-1) for farnesyl diphosphate.</text>
    </kinetics>
</comment>
<comment type="pathway">
    <text>Secondary metabolite biosynthesis; terpenoid biosynthesis.</text>
</comment>
<comment type="induction">
    <text evidence="2">Up-regulated by methyl jasmonate.</text>
</comment>
<comment type="domain">
    <text evidence="1">The Asp-Asp-Xaa-Xaa-Asp/Glu (DDXXD/E) motif is important for the catalytic activity, presumably through binding to Mg(2+).</text>
</comment>
<comment type="similarity">
    <text evidence="3">Belongs to the terpene synthase family.</text>
</comment>
<proteinExistence type="evidence at protein level"/>
<name>DGUS3_AQUCR</name>
<feature type="chain" id="PRO_0000419797" description="Delta-guaiene synthase 3">
    <location>
        <begin position="1"/>
        <end position="547"/>
    </location>
</feature>
<feature type="short sequence motif" description="DDXXD motif">
    <location>
        <begin position="299"/>
        <end position="303"/>
    </location>
</feature>
<feature type="binding site" evidence="1">
    <location>
        <position position="299"/>
    </location>
    <ligand>
        <name>Mg(2+)</name>
        <dbReference type="ChEBI" id="CHEBI:18420"/>
        <label>1</label>
    </ligand>
</feature>
<feature type="binding site" evidence="1">
    <location>
        <position position="299"/>
    </location>
    <ligand>
        <name>Mg(2+)</name>
        <dbReference type="ChEBI" id="CHEBI:18420"/>
        <label>2</label>
    </ligand>
</feature>
<feature type="binding site" evidence="1">
    <location>
        <position position="303"/>
    </location>
    <ligand>
        <name>Mg(2+)</name>
        <dbReference type="ChEBI" id="CHEBI:18420"/>
        <label>1</label>
    </ligand>
</feature>
<feature type="binding site" evidence="1">
    <location>
        <position position="303"/>
    </location>
    <ligand>
        <name>Mg(2+)</name>
        <dbReference type="ChEBI" id="CHEBI:18420"/>
        <label>2</label>
    </ligand>
</feature>
<feature type="binding site" evidence="1">
    <location>
        <position position="444"/>
    </location>
    <ligand>
        <name>Mg(2+)</name>
        <dbReference type="ChEBI" id="CHEBI:18420"/>
        <label>3</label>
    </ligand>
</feature>
<reference key="1">
    <citation type="journal article" date="2010" name="Plant Physiol.">
        <title>Characterization of {delta}-Guaiene Synthases from Cultured Cells of Aquilaria, Responsible for the Formation of the Sesquiterpenes in Agarwood.</title>
        <authorList>
            <person name="Kumeta Y."/>
            <person name="Ito M."/>
        </authorList>
    </citation>
    <scope>NUCLEOTIDE SEQUENCE [MRNA]</scope>
    <scope>FUNCTION</scope>
    <scope>CATALYTIC ACTIVITY</scope>
    <scope>BIOPHYSICOCHEMICAL PROPERTIES</scope>
    <scope>INDUCTION BY METHYL JASMONATE</scope>
</reference>
<accession>D0VMR8</accession>
<sequence length="547" mass="63943">MSSAKLGSASEDVSRRDANYHPTVWGDFFLTHSSDFLENNDSILEKHEELKQEVRNLLVVETSDLPSKIQLTDDIIRLGVGYHFETEIKAQLEKLHDHQLHLNFDLLTTSVWFRLLRGHGFSISSDVFKRFKNTKGEFETEDARTLWCLYEATHLRVDGEDILEEAIQFSRKKLEALLPELSFPLNECVRDALHIPYHRNVQRLAARQYIPQYDAEPTKIESLSLFAKIDFNMLQALHQRELREASRWWKEFDFPSKLPYARDRIAEGYYWMMGAHFEPKFSLSRKFLNRIIGITSLIDDTYDVYGTLEEVTLFTEAVERWDIEAVKDIPKYMQVIYIGMLGIFEDFKDNLINARGKDYCIDYAIEVFKEIVRSYQREAEYFHTGYVPSYDEYMENSIISGGYKMFIILMLIGRGEFELKETLDWASTIPEMVKASSLIARYIDDLQTYKAEEERGETVSAVRCYMREYDVSEEEACKKMREMIEIEWKRLNKTTLEADEVSSSVVIPSLNFTRVLEVMYDKGDGYSDSQGVTKDRIAALLRHAIEI</sequence>
<evidence type="ECO:0000250" key="1"/>
<evidence type="ECO:0000269" key="2">
    <source>
    </source>
</evidence>
<evidence type="ECO:0000305" key="3"/>